<protein>
    <recommendedName>
        <fullName evidence="1">ATP synthase epsilon chain</fullName>
    </recommendedName>
    <alternativeName>
        <fullName evidence="1">ATP synthase F1 sector epsilon subunit</fullName>
    </alternativeName>
    <alternativeName>
        <fullName evidence="1">F-ATPase epsilon subunit</fullName>
    </alternativeName>
</protein>
<keyword id="KW-0066">ATP synthesis</keyword>
<keyword id="KW-0997">Cell inner membrane</keyword>
<keyword id="KW-1003">Cell membrane</keyword>
<keyword id="KW-0139">CF(1)</keyword>
<keyword id="KW-0375">Hydrogen ion transport</keyword>
<keyword id="KW-0406">Ion transport</keyword>
<keyword id="KW-0472">Membrane</keyword>
<keyword id="KW-1185">Reference proteome</keyword>
<keyword id="KW-0813">Transport</keyword>
<comment type="function">
    <text evidence="1">Produces ATP from ADP in the presence of a proton gradient across the membrane.</text>
</comment>
<comment type="subunit">
    <text>F-type ATPases have 2 components, CF(1) - the catalytic core - and CF(0) - the membrane proton channel. CF(1) has five subunits: alpha(3), beta(3), gamma(1), delta(1), epsilon(1). CF(0) has three main subunits: a, b and c.</text>
</comment>
<comment type="subcellular location">
    <subcellularLocation>
        <location evidence="1">Cell inner membrane</location>
        <topology evidence="1">Peripheral membrane protein</topology>
    </subcellularLocation>
</comment>
<comment type="similarity">
    <text evidence="1">Belongs to the ATPase epsilon chain family.</text>
</comment>
<proteinExistence type="inferred from homology"/>
<name>ATPE_PSYA2</name>
<accession>Q4FQ38</accession>
<sequence>MATLQCRIVSAREELYSGEISMLIASGTEGEIGILPGHTPLITLLKPGAMRVQTSNGEEEVIYVSGGVLEVQPKMVTVLADTAMRAHNLDESKIVEARKKAEQMLVNQSDTVQINAALASLAESVAQLQTIRKYKNRA</sequence>
<dbReference type="EMBL" id="CP000082">
    <property type="protein sequence ID" value="AAZ19870.1"/>
    <property type="molecule type" value="Genomic_DNA"/>
</dbReference>
<dbReference type="RefSeq" id="WP_011281278.1">
    <property type="nucleotide sequence ID" value="NC_007204.1"/>
</dbReference>
<dbReference type="SMR" id="Q4FQ38"/>
<dbReference type="STRING" id="259536.Psyc_2023"/>
<dbReference type="KEGG" id="par:Psyc_2023"/>
<dbReference type="eggNOG" id="COG0355">
    <property type="taxonomic scope" value="Bacteria"/>
</dbReference>
<dbReference type="HOGENOM" id="CLU_084338_2_0_6"/>
<dbReference type="OrthoDB" id="9791445at2"/>
<dbReference type="Proteomes" id="UP000000546">
    <property type="component" value="Chromosome"/>
</dbReference>
<dbReference type="GO" id="GO:0005886">
    <property type="term" value="C:plasma membrane"/>
    <property type="evidence" value="ECO:0007669"/>
    <property type="project" value="UniProtKB-SubCell"/>
</dbReference>
<dbReference type="GO" id="GO:0045259">
    <property type="term" value="C:proton-transporting ATP synthase complex"/>
    <property type="evidence" value="ECO:0007669"/>
    <property type="project" value="UniProtKB-KW"/>
</dbReference>
<dbReference type="GO" id="GO:0005524">
    <property type="term" value="F:ATP binding"/>
    <property type="evidence" value="ECO:0007669"/>
    <property type="project" value="UniProtKB-UniRule"/>
</dbReference>
<dbReference type="GO" id="GO:0046933">
    <property type="term" value="F:proton-transporting ATP synthase activity, rotational mechanism"/>
    <property type="evidence" value="ECO:0007669"/>
    <property type="project" value="UniProtKB-UniRule"/>
</dbReference>
<dbReference type="CDD" id="cd12152">
    <property type="entry name" value="F1-ATPase_delta"/>
    <property type="match status" value="1"/>
</dbReference>
<dbReference type="FunFam" id="2.60.15.10:FF:000001">
    <property type="entry name" value="ATP synthase epsilon chain"/>
    <property type="match status" value="1"/>
</dbReference>
<dbReference type="Gene3D" id="1.20.5.440">
    <property type="entry name" value="ATP synthase delta/epsilon subunit, C-terminal domain"/>
    <property type="match status" value="1"/>
</dbReference>
<dbReference type="Gene3D" id="2.60.15.10">
    <property type="entry name" value="F0F1 ATP synthase delta/epsilon subunit, N-terminal"/>
    <property type="match status" value="1"/>
</dbReference>
<dbReference type="HAMAP" id="MF_00530">
    <property type="entry name" value="ATP_synth_epsil_bac"/>
    <property type="match status" value="1"/>
</dbReference>
<dbReference type="InterPro" id="IPR036794">
    <property type="entry name" value="ATP_F1_dsu/esu_C_sf"/>
</dbReference>
<dbReference type="InterPro" id="IPR001469">
    <property type="entry name" value="ATP_synth_F1_dsu/esu"/>
</dbReference>
<dbReference type="InterPro" id="IPR020546">
    <property type="entry name" value="ATP_synth_F1_dsu/esu_N"/>
</dbReference>
<dbReference type="InterPro" id="IPR036771">
    <property type="entry name" value="ATPsynth_dsu/esu_N"/>
</dbReference>
<dbReference type="NCBIfam" id="TIGR01216">
    <property type="entry name" value="ATP_synt_epsi"/>
    <property type="match status" value="1"/>
</dbReference>
<dbReference type="NCBIfam" id="NF001847">
    <property type="entry name" value="PRK00571.1-4"/>
    <property type="match status" value="1"/>
</dbReference>
<dbReference type="NCBIfam" id="NF009977">
    <property type="entry name" value="PRK13442.1"/>
    <property type="match status" value="1"/>
</dbReference>
<dbReference type="PANTHER" id="PTHR13822">
    <property type="entry name" value="ATP SYNTHASE DELTA/EPSILON CHAIN"/>
    <property type="match status" value="1"/>
</dbReference>
<dbReference type="PANTHER" id="PTHR13822:SF10">
    <property type="entry name" value="ATP SYNTHASE EPSILON CHAIN, CHLOROPLASTIC"/>
    <property type="match status" value="1"/>
</dbReference>
<dbReference type="Pfam" id="PF02823">
    <property type="entry name" value="ATP-synt_DE_N"/>
    <property type="match status" value="1"/>
</dbReference>
<dbReference type="SUPFAM" id="SSF46604">
    <property type="entry name" value="Epsilon subunit of F1F0-ATP synthase C-terminal domain"/>
    <property type="match status" value="1"/>
</dbReference>
<dbReference type="SUPFAM" id="SSF51344">
    <property type="entry name" value="Epsilon subunit of F1F0-ATP synthase N-terminal domain"/>
    <property type="match status" value="1"/>
</dbReference>
<organism>
    <name type="scientific">Psychrobacter arcticus (strain DSM 17307 / VKM B-2377 / 273-4)</name>
    <dbReference type="NCBI Taxonomy" id="259536"/>
    <lineage>
        <taxon>Bacteria</taxon>
        <taxon>Pseudomonadati</taxon>
        <taxon>Pseudomonadota</taxon>
        <taxon>Gammaproteobacteria</taxon>
        <taxon>Moraxellales</taxon>
        <taxon>Moraxellaceae</taxon>
        <taxon>Psychrobacter</taxon>
    </lineage>
</organism>
<reference key="1">
    <citation type="journal article" date="2010" name="Appl. Environ. Microbiol.">
        <title>The genome sequence of Psychrobacter arcticus 273-4, a psychroactive Siberian permafrost bacterium, reveals mechanisms for adaptation to low-temperature growth.</title>
        <authorList>
            <person name="Ayala-del-Rio H.L."/>
            <person name="Chain P.S."/>
            <person name="Grzymski J.J."/>
            <person name="Ponder M.A."/>
            <person name="Ivanova N."/>
            <person name="Bergholz P.W."/>
            <person name="Di Bartolo G."/>
            <person name="Hauser L."/>
            <person name="Land M."/>
            <person name="Bakermans C."/>
            <person name="Rodrigues D."/>
            <person name="Klappenbach J."/>
            <person name="Zarka D."/>
            <person name="Larimer F."/>
            <person name="Richardson P."/>
            <person name="Murray A."/>
            <person name="Thomashow M."/>
            <person name="Tiedje J.M."/>
        </authorList>
    </citation>
    <scope>NUCLEOTIDE SEQUENCE [LARGE SCALE GENOMIC DNA]</scope>
    <source>
        <strain>DSM 17307 / VKM B-2377 / 273-4</strain>
    </source>
</reference>
<feature type="chain" id="PRO_0000265866" description="ATP synthase epsilon chain">
    <location>
        <begin position="1"/>
        <end position="138"/>
    </location>
</feature>
<evidence type="ECO:0000255" key="1">
    <source>
        <dbReference type="HAMAP-Rule" id="MF_00530"/>
    </source>
</evidence>
<gene>
    <name evidence="1" type="primary">atpC</name>
    <name type="ordered locus">Psyc_2023</name>
</gene>